<feature type="chain" id="PRO_0000127903" description="Uncharacterized protein AF_0644">
    <location>
        <begin position="1"/>
        <end position="35"/>
    </location>
</feature>
<reference key="1">
    <citation type="journal article" date="1997" name="Nature">
        <title>The complete genome sequence of the hyperthermophilic, sulphate-reducing archaeon Archaeoglobus fulgidus.</title>
        <authorList>
            <person name="Klenk H.-P."/>
            <person name="Clayton R.A."/>
            <person name="Tomb J.-F."/>
            <person name="White O."/>
            <person name="Nelson K.E."/>
            <person name="Ketchum K.A."/>
            <person name="Dodson R.J."/>
            <person name="Gwinn M.L."/>
            <person name="Hickey E.K."/>
            <person name="Peterson J.D."/>
            <person name="Richardson D.L."/>
            <person name="Kerlavage A.R."/>
            <person name="Graham D.E."/>
            <person name="Kyrpides N.C."/>
            <person name="Fleischmann R.D."/>
            <person name="Quackenbush J."/>
            <person name="Lee N.H."/>
            <person name="Sutton G.G."/>
            <person name="Gill S.R."/>
            <person name="Kirkness E.F."/>
            <person name="Dougherty B.A."/>
            <person name="McKenney K."/>
            <person name="Adams M.D."/>
            <person name="Loftus B.J."/>
            <person name="Peterson S.N."/>
            <person name="Reich C.I."/>
            <person name="McNeil L.K."/>
            <person name="Badger J.H."/>
            <person name="Glodek A."/>
            <person name="Zhou L."/>
            <person name="Overbeek R."/>
            <person name="Gocayne J.D."/>
            <person name="Weidman J.F."/>
            <person name="McDonald L.A."/>
            <person name="Utterback T.R."/>
            <person name="Cotton M.D."/>
            <person name="Spriggs T."/>
            <person name="Artiach P."/>
            <person name="Kaine B.P."/>
            <person name="Sykes S.M."/>
            <person name="Sadow P.W."/>
            <person name="D'Andrea K.P."/>
            <person name="Bowman C."/>
            <person name="Fujii C."/>
            <person name="Garland S.A."/>
            <person name="Mason T.M."/>
            <person name="Olsen G.J."/>
            <person name="Fraser C.M."/>
            <person name="Smith H.O."/>
            <person name="Woese C.R."/>
            <person name="Venter J.C."/>
        </authorList>
    </citation>
    <scope>NUCLEOTIDE SEQUENCE [LARGE SCALE GENOMIC DNA]</scope>
    <source>
        <strain>ATCC 49558 / DSM 4304 / JCM 9628 / NBRC 100126 / VC-16</strain>
    </source>
</reference>
<dbReference type="EMBL" id="AE000782">
    <property type="protein sequence ID" value="AAB90607.1"/>
    <property type="molecule type" value="Genomic_DNA"/>
</dbReference>
<dbReference type="PIR" id="D69330">
    <property type="entry name" value="D69330"/>
</dbReference>
<dbReference type="SMR" id="O29613"/>
<dbReference type="STRING" id="224325.AF_0644"/>
<dbReference type="PaxDb" id="224325-AF_0644"/>
<dbReference type="EnsemblBacteria" id="AAB90607">
    <property type="protein sequence ID" value="AAB90607"/>
    <property type="gene ID" value="AF_0644"/>
</dbReference>
<dbReference type="KEGG" id="afu:AF_0644"/>
<dbReference type="HOGENOM" id="CLU_3362462_0_0_2"/>
<dbReference type="Proteomes" id="UP000002199">
    <property type="component" value="Chromosome"/>
</dbReference>
<name>Y644_ARCFU</name>
<keyword id="KW-1185">Reference proteome</keyword>
<proteinExistence type="predicted"/>
<protein>
    <recommendedName>
        <fullName>Uncharacterized protein AF_0644</fullName>
    </recommendedName>
</protein>
<gene>
    <name type="ordered locus">AF_0644</name>
</gene>
<organism>
    <name type="scientific">Archaeoglobus fulgidus (strain ATCC 49558 / DSM 4304 / JCM 9628 / NBRC 100126 / VC-16)</name>
    <dbReference type="NCBI Taxonomy" id="224325"/>
    <lineage>
        <taxon>Archaea</taxon>
        <taxon>Methanobacteriati</taxon>
        <taxon>Methanobacteriota</taxon>
        <taxon>Archaeoglobi</taxon>
        <taxon>Archaeoglobales</taxon>
        <taxon>Archaeoglobaceae</taxon>
        <taxon>Archaeoglobus</taxon>
    </lineage>
</organism>
<sequence length="35" mass="4056">MHTYAAIFGVVAILLHLIENRRCVKLYVRETLRGV</sequence>
<accession>O29613</accession>